<organism>
    <name type="scientific">Rattus norvegicus</name>
    <name type="common">Rat</name>
    <dbReference type="NCBI Taxonomy" id="10116"/>
    <lineage>
        <taxon>Eukaryota</taxon>
        <taxon>Metazoa</taxon>
        <taxon>Chordata</taxon>
        <taxon>Craniata</taxon>
        <taxon>Vertebrata</taxon>
        <taxon>Euteleostomi</taxon>
        <taxon>Mammalia</taxon>
        <taxon>Eutheria</taxon>
        <taxon>Euarchontoglires</taxon>
        <taxon>Glires</taxon>
        <taxon>Rodentia</taxon>
        <taxon>Myomorpha</taxon>
        <taxon>Muroidea</taxon>
        <taxon>Muridae</taxon>
        <taxon>Murinae</taxon>
        <taxon>Rattus</taxon>
    </lineage>
</organism>
<evidence type="ECO:0000250" key="1">
    <source>
        <dbReference type="UniProtKB" id="Q9BXU9"/>
    </source>
</evidence>
<evidence type="ECO:0000255" key="2"/>
<evidence type="ECO:0000255" key="3">
    <source>
        <dbReference type="PROSITE-ProRule" id="PRU00448"/>
    </source>
</evidence>
<evidence type="ECO:0000256" key="4">
    <source>
        <dbReference type="SAM" id="MobiDB-lite"/>
    </source>
</evidence>
<evidence type="ECO:0000269" key="5">
    <source>
    </source>
</evidence>
<evidence type="ECO:0000269" key="6">
    <source>
    </source>
</evidence>
<evidence type="ECO:0000305" key="7"/>
<evidence type="ECO:0000305" key="8">
    <source>
    </source>
</evidence>
<evidence type="ECO:0000312" key="9">
    <source>
        <dbReference type="EMBL" id="ABI94065.1"/>
    </source>
</evidence>
<evidence type="ECO:0000312" key="10">
    <source>
        <dbReference type="Proteomes" id="UP000002494"/>
    </source>
</evidence>
<proteinExistence type="evidence at protein level"/>
<name>CABP8_RAT</name>
<gene>
    <name type="primary">Caln1</name>
    <name type="synonym">Cabp8</name>
</gene>
<comment type="function">
    <text evidence="6">Negatively regulates Golgi-to-plasma membrane trafficking by interacting with PI4KB and inhibiting its activity. May play a role in the physiology of neurons and is potentially important in memory and learning.</text>
</comment>
<comment type="subunit">
    <text evidence="6">Interacts with PI4KB. This binding competes with FREQ/NCS1 binding in a calcium-dependent manner.</text>
</comment>
<comment type="subcellular location">
    <subcellularLocation>
        <location evidence="8">Golgi apparatus</location>
        <location evidence="8">trans-Golgi network membrane</location>
        <topology evidence="8">Single-pass type IV membrane protein</topology>
    </subcellularLocation>
    <subcellularLocation>
        <location evidence="1">Cytoplasm</location>
        <location evidence="1">Perinuclear region</location>
    </subcellularLocation>
    <subcellularLocation>
        <location evidence="1">Cell membrane</location>
        <topology evidence="1">Single-pass type IV membrane protein</topology>
    </subcellularLocation>
</comment>
<comment type="alternative products">
    <event type="alternative splicing"/>
    <isoform>
        <id>Q06BI3-1</id>
        <name>1</name>
        <sequence type="displayed"/>
    </isoform>
    <isoform>
        <id>Q06BI3-2</id>
        <name>2</name>
        <sequence type="described" ref="VSP_060875"/>
    </isoform>
</comment>
<comment type="tissue specificity">
    <text evidence="5">Brain-specific. High expression in the cerebellum, hippocampus, and cortex.</text>
</comment>
<comment type="domain">
    <text evidence="1">The C-terminal transmembrane domain (TMD) is necessary and sufficient for membrane targeting.</text>
</comment>
<comment type="miscellaneous">
    <text>Calcium binding induces conformational changes in CALN1/CABP8. The calcium binding affinity is not regulated by magnesium.</text>
</comment>
<sequence>MRLPEQPGDGKPENETKGDQETPERGEEPRRSPAPDFPTWEKMPFHHVTAGLLYKGNYLNRSLSAGSDSEQLANISVEELDEIREAFRVLDRDGNGFISKQELGMAMRSLGYMPSEVELAIIMQRLDMDGDGQVDFDEFMTILGPKLVSSEGRDGFLGNTIDSIFWQFDMQRVTLEELKHILYHAFRDHLTMKDIENIIINEEESLNETSGNCQTEFEGVHSQKQNRQTCVRKSLICAFAMAFIISVMLIAANQILRSGME</sequence>
<dbReference type="EMBL" id="DQ914829">
    <property type="protein sequence ID" value="ABI94064.1"/>
    <property type="molecule type" value="mRNA"/>
</dbReference>
<dbReference type="EMBL" id="DQ914830">
    <property type="protein sequence ID" value="ABI94065.1"/>
    <property type="molecule type" value="mRNA"/>
</dbReference>
<dbReference type="EMBL" id="AABR07035976">
    <property type="status" value="NOT_ANNOTATED_CDS"/>
    <property type="molecule type" value="Genomic_DNA"/>
</dbReference>
<dbReference type="EMBL" id="AABR07035980">
    <property type="status" value="NOT_ANNOTATED_CDS"/>
    <property type="molecule type" value="Genomic_DNA"/>
</dbReference>
<dbReference type="EMBL" id="AABR07035978">
    <property type="status" value="NOT_ANNOTATED_CDS"/>
    <property type="molecule type" value="Genomic_DNA"/>
</dbReference>
<dbReference type="EMBL" id="AABR07035977">
    <property type="status" value="NOT_ANNOTATED_CDS"/>
    <property type="molecule type" value="Genomic_DNA"/>
</dbReference>
<dbReference type="EMBL" id="AABR07035979">
    <property type="status" value="NOT_ANNOTATED_CDS"/>
    <property type="molecule type" value="Genomic_DNA"/>
</dbReference>
<dbReference type="RefSeq" id="NP_001070669.1">
    <molecule id="Q06BI3-1"/>
    <property type="nucleotide sequence ID" value="NM_001077201.3"/>
</dbReference>
<dbReference type="RefSeq" id="XP_006249305.1">
    <molecule id="Q06BI3-2"/>
    <property type="nucleotide sequence ID" value="XM_006249243.5"/>
</dbReference>
<dbReference type="RefSeq" id="XP_017453898.1">
    <property type="nucleotide sequence ID" value="XM_017598409.1"/>
</dbReference>
<dbReference type="RefSeq" id="XP_038945556.1">
    <molecule id="Q06BI3-1"/>
    <property type="nucleotide sequence ID" value="XM_039089628.2"/>
</dbReference>
<dbReference type="RefSeq" id="XP_038945559.1">
    <molecule id="Q06BI3-2"/>
    <property type="nucleotide sequence ID" value="XM_039089631.2"/>
</dbReference>
<dbReference type="RefSeq" id="XP_063127626.1">
    <molecule id="Q06BI3-1"/>
    <property type="nucleotide sequence ID" value="XM_063271556.1"/>
</dbReference>
<dbReference type="RefSeq" id="XP_063127627.1">
    <molecule id="Q06BI3-1"/>
    <property type="nucleotide sequence ID" value="XM_063271557.1"/>
</dbReference>
<dbReference type="RefSeq" id="XP_063127628.1">
    <molecule id="Q06BI3-1"/>
    <property type="nucleotide sequence ID" value="XM_063271558.1"/>
</dbReference>
<dbReference type="RefSeq" id="XP_063127629.1">
    <molecule id="Q06BI3-1"/>
    <property type="nucleotide sequence ID" value="XM_063271559.1"/>
</dbReference>
<dbReference type="SMR" id="Q06BI3"/>
<dbReference type="FunCoup" id="Q06BI3">
    <property type="interactions" value="57"/>
</dbReference>
<dbReference type="STRING" id="10116.ENSRNOP00000001185"/>
<dbReference type="iPTMnet" id="Q06BI3"/>
<dbReference type="PhosphoSitePlus" id="Q06BI3"/>
<dbReference type="PaxDb" id="10116-ENSRNOP00000001185"/>
<dbReference type="Ensembl" id="ENSRNOT00000001185.5">
    <molecule id="Q06BI3-1"/>
    <property type="protein sequence ID" value="ENSRNOP00000001185.5"/>
    <property type="gene ID" value="ENSRNOG00000000886.5"/>
</dbReference>
<dbReference type="GeneID" id="363909"/>
<dbReference type="KEGG" id="rno:363909"/>
<dbReference type="AGR" id="RGD:1305843"/>
<dbReference type="CTD" id="83698"/>
<dbReference type="RGD" id="1305843">
    <property type="gene designation" value="Caln1"/>
</dbReference>
<dbReference type="eggNOG" id="KOG0027">
    <property type="taxonomic scope" value="Eukaryota"/>
</dbReference>
<dbReference type="GeneTree" id="ENSGT00940000159212"/>
<dbReference type="HOGENOM" id="CLU_106115_0_0_1"/>
<dbReference type="InParanoid" id="Q06BI3"/>
<dbReference type="OMA" id="DMQRMTL"/>
<dbReference type="OrthoDB" id="26525at2759"/>
<dbReference type="TreeFam" id="TF331025"/>
<dbReference type="PRO" id="PR:Q06BI3"/>
<dbReference type="Proteomes" id="UP000002494">
    <property type="component" value="Chromosome 12"/>
</dbReference>
<dbReference type="Bgee" id="ENSRNOG00000000886">
    <property type="expression patterns" value="Expressed in frontal cortex and 4 other cell types or tissues"/>
</dbReference>
<dbReference type="GO" id="GO:0048471">
    <property type="term" value="C:perinuclear region of cytoplasm"/>
    <property type="evidence" value="ECO:0007669"/>
    <property type="project" value="UniProtKB-SubCell"/>
</dbReference>
<dbReference type="GO" id="GO:0005886">
    <property type="term" value="C:plasma membrane"/>
    <property type="evidence" value="ECO:0007669"/>
    <property type="project" value="UniProtKB-SubCell"/>
</dbReference>
<dbReference type="GO" id="GO:0032588">
    <property type="term" value="C:trans-Golgi network membrane"/>
    <property type="evidence" value="ECO:0000266"/>
    <property type="project" value="RGD"/>
</dbReference>
<dbReference type="GO" id="GO:0005509">
    <property type="term" value="F:calcium ion binding"/>
    <property type="evidence" value="ECO:0007669"/>
    <property type="project" value="InterPro"/>
</dbReference>
<dbReference type="CDD" id="cd00051">
    <property type="entry name" value="EFh"/>
    <property type="match status" value="1"/>
</dbReference>
<dbReference type="FunFam" id="1.10.238.10:FF:000115">
    <property type="entry name" value="Calcium-binding protein 8"/>
    <property type="match status" value="1"/>
</dbReference>
<dbReference type="Gene3D" id="1.10.238.10">
    <property type="entry name" value="EF-hand"/>
    <property type="match status" value="1"/>
</dbReference>
<dbReference type="InterPro" id="IPR051111">
    <property type="entry name" value="Ca-binding_regulatory"/>
</dbReference>
<dbReference type="InterPro" id="IPR011992">
    <property type="entry name" value="EF-hand-dom_pair"/>
</dbReference>
<dbReference type="InterPro" id="IPR018247">
    <property type="entry name" value="EF_Hand_1_Ca_BS"/>
</dbReference>
<dbReference type="InterPro" id="IPR002048">
    <property type="entry name" value="EF_hand_dom"/>
</dbReference>
<dbReference type="InterPro" id="IPR001751">
    <property type="entry name" value="S100/CaBP7/8-like_CS"/>
</dbReference>
<dbReference type="PANTHER" id="PTHR46311:SF3">
    <property type="entry name" value="CALCIUM-BINDING PROTEIN 8"/>
    <property type="match status" value="1"/>
</dbReference>
<dbReference type="PANTHER" id="PTHR46311">
    <property type="entry name" value="CALCIUM-BINDING PROTEIN 8-RELATED"/>
    <property type="match status" value="1"/>
</dbReference>
<dbReference type="Pfam" id="PF13499">
    <property type="entry name" value="EF-hand_7"/>
    <property type="match status" value="1"/>
</dbReference>
<dbReference type="SMART" id="SM00054">
    <property type="entry name" value="EFh"/>
    <property type="match status" value="2"/>
</dbReference>
<dbReference type="SUPFAM" id="SSF47473">
    <property type="entry name" value="EF-hand"/>
    <property type="match status" value="1"/>
</dbReference>
<dbReference type="PROSITE" id="PS00018">
    <property type="entry name" value="EF_HAND_1"/>
    <property type="match status" value="2"/>
</dbReference>
<dbReference type="PROSITE" id="PS50222">
    <property type="entry name" value="EF_HAND_2"/>
    <property type="match status" value="2"/>
</dbReference>
<accession>Q06BI3</accession>
<accession>Q06BI2</accession>
<keyword id="KW-0025">Alternative splicing</keyword>
<keyword id="KW-0106">Calcium</keyword>
<keyword id="KW-1003">Cell membrane</keyword>
<keyword id="KW-0963">Cytoplasm</keyword>
<keyword id="KW-0333">Golgi apparatus</keyword>
<keyword id="KW-0472">Membrane</keyword>
<keyword id="KW-0479">Metal-binding</keyword>
<keyword id="KW-1185">Reference proteome</keyword>
<keyword id="KW-0677">Repeat</keyword>
<keyword id="KW-0812">Transmembrane</keyword>
<keyword id="KW-1133">Transmembrane helix</keyword>
<feature type="chain" id="PRO_0000383473" description="Calcium-binding protein 8">
    <location>
        <begin position="1"/>
        <end position="261"/>
    </location>
</feature>
<feature type="topological domain" description="Cytoplasmic" evidence="2">
    <location>
        <begin position="1"/>
        <end position="234"/>
    </location>
</feature>
<feature type="transmembrane region" description="Helical; Anchor for type IV membrane protein" evidence="2">
    <location>
        <begin position="235"/>
        <end position="255"/>
    </location>
</feature>
<feature type="topological domain" description="Extracellular" evidence="2">
    <location>
        <begin position="256"/>
        <end position="261"/>
    </location>
</feature>
<feature type="domain" description="EF-hand 1" evidence="3">
    <location>
        <begin position="78"/>
        <end position="113"/>
    </location>
</feature>
<feature type="domain" description="EF-hand 2" evidence="3">
    <location>
        <begin position="114"/>
        <end position="149"/>
    </location>
</feature>
<feature type="region of interest" description="Disordered" evidence="4">
    <location>
        <begin position="1"/>
        <end position="41"/>
    </location>
</feature>
<feature type="compositionally biased region" description="Basic and acidic residues" evidence="4">
    <location>
        <begin position="8"/>
        <end position="33"/>
    </location>
</feature>
<feature type="binding site" evidence="3">
    <location>
        <position position="91"/>
    </location>
    <ligand>
        <name>Ca(2+)</name>
        <dbReference type="ChEBI" id="CHEBI:29108"/>
        <label>1</label>
    </ligand>
</feature>
<feature type="binding site" evidence="3">
    <location>
        <position position="93"/>
    </location>
    <ligand>
        <name>Ca(2+)</name>
        <dbReference type="ChEBI" id="CHEBI:29108"/>
        <label>1</label>
    </ligand>
</feature>
<feature type="binding site" evidence="3">
    <location>
        <position position="95"/>
    </location>
    <ligand>
        <name>Ca(2+)</name>
        <dbReference type="ChEBI" id="CHEBI:29108"/>
        <label>1</label>
    </ligand>
</feature>
<feature type="binding site" evidence="3">
    <location>
        <position position="102"/>
    </location>
    <ligand>
        <name>Ca(2+)</name>
        <dbReference type="ChEBI" id="CHEBI:29108"/>
        <label>1</label>
    </ligand>
</feature>
<feature type="binding site" evidence="3">
    <location>
        <position position="127"/>
    </location>
    <ligand>
        <name>Ca(2+)</name>
        <dbReference type="ChEBI" id="CHEBI:29108"/>
        <label>2</label>
    </ligand>
</feature>
<feature type="binding site" evidence="3">
    <location>
        <position position="129"/>
    </location>
    <ligand>
        <name>Ca(2+)</name>
        <dbReference type="ChEBI" id="CHEBI:29108"/>
        <label>2</label>
    </ligand>
</feature>
<feature type="binding site" evidence="3">
    <location>
        <position position="131"/>
    </location>
    <ligand>
        <name>Ca(2+)</name>
        <dbReference type="ChEBI" id="CHEBI:29108"/>
        <label>2</label>
    </ligand>
</feature>
<feature type="binding site" evidence="3">
    <location>
        <position position="133"/>
    </location>
    <ligand>
        <name>Ca(2+)</name>
        <dbReference type="ChEBI" id="CHEBI:29108"/>
        <label>2</label>
    </ligand>
</feature>
<feature type="binding site" evidence="3">
    <location>
        <position position="138"/>
    </location>
    <ligand>
        <name>Ca(2+)</name>
        <dbReference type="ChEBI" id="CHEBI:29108"/>
        <label>2</label>
    </ligand>
</feature>
<feature type="splice variant" id="VSP_060875" description="In isoform 2." evidence="7">
    <location>
        <begin position="1"/>
        <end position="42"/>
    </location>
</feature>
<protein>
    <recommendedName>
        <fullName>Calcium-binding protein 8</fullName>
        <shortName>CaBP8</shortName>
    </recommendedName>
    <alternativeName>
        <fullName>Calneuron I</fullName>
    </alternativeName>
    <alternativeName>
        <fullName>Calneuron-1</fullName>
    </alternativeName>
</protein>
<reference key="1">
    <citation type="journal article" date="2006" name="Biochim. Biophys. Acta">
        <title>Neuronal Ca2+ signaling via caldendrin and calneurons.</title>
        <authorList>
            <person name="Mikhaylova M."/>
            <person name="Sharma Y."/>
            <person name="Reissner C."/>
            <person name="Nagel F."/>
            <person name="Aravind P."/>
            <person name="Rajini B."/>
            <person name="Smalla K.-H."/>
            <person name="Gundelfinger E.D."/>
            <person name="Kreutz M.R."/>
        </authorList>
    </citation>
    <scope>NUCLEOTIDE SEQUENCE [MRNA] (ISOFORM 2)</scope>
    <scope>TISSUE SPECIFICITY</scope>
</reference>
<reference evidence="9" key="2">
    <citation type="submission" date="2006-08" db="EMBL/GenBank/DDBJ databases">
        <title>Long isoform of Calneuron I, a protein involved in neuronal Ca2+-signaling.</title>
        <authorList>
            <person name="Mikhaylova M."/>
            <person name="Kreutz M.R."/>
        </authorList>
    </citation>
    <scope>NUCLEOTIDE SEQUENCE [MRNA] (ISOFORM 1)</scope>
</reference>
<reference evidence="10" key="3">
    <citation type="journal article" date="2004" name="Nature">
        <title>Genome sequence of the Brown Norway rat yields insights into mammalian evolution.</title>
        <authorList>
            <person name="Gibbs R.A."/>
            <person name="Weinstock G.M."/>
            <person name="Metzker M.L."/>
            <person name="Muzny D.M."/>
            <person name="Sodergren E.J."/>
            <person name="Scherer S."/>
            <person name="Scott G."/>
            <person name="Steffen D."/>
            <person name="Worley K.C."/>
            <person name="Burch P.E."/>
            <person name="Okwuonu G."/>
            <person name="Hines S."/>
            <person name="Lewis L."/>
            <person name="Deramo C."/>
            <person name="Delgado O."/>
            <person name="Dugan-Rocha S."/>
            <person name="Miner G."/>
            <person name="Morgan M."/>
            <person name="Hawes A."/>
            <person name="Gill R."/>
            <person name="Holt R.A."/>
            <person name="Adams M.D."/>
            <person name="Amanatides P.G."/>
            <person name="Baden-Tillson H."/>
            <person name="Barnstead M."/>
            <person name="Chin S."/>
            <person name="Evans C.A."/>
            <person name="Ferriera S."/>
            <person name="Fosler C."/>
            <person name="Glodek A."/>
            <person name="Gu Z."/>
            <person name="Jennings D."/>
            <person name="Kraft C.L."/>
            <person name="Nguyen T."/>
            <person name="Pfannkoch C.M."/>
            <person name="Sitter C."/>
            <person name="Sutton G.G."/>
            <person name="Venter J.C."/>
            <person name="Woodage T."/>
            <person name="Smith D."/>
            <person name="Lee H.-M."/>
            <person name="Gustafson E."/>
            <person name="Cahill P."/>
            <person name="Kana A."/>
            <person name="Doucette-Stamm L."/>
            <person name="Weinstock K."/>
            <person name="Fechtel K."/>
            <person name="Weiss R.B."/>
            <person name="Dunn D.M."/>
            <person name="Green E.D."/>
            <person name="Blakesley R.W."/>
            <person name="Bouffard G.G."/>
            <person name="De Jong P.J."/>
            <person name="Osoegawa K."/>
            <person name="Zhu B."/>
            <person name="Marra M."/>
            <person name="Schein J."/>
            <person name="Bosdet I."/>
            <person name="Fjell C."/>
            <person name="Jones S."/>
            <person name="Krzywinski M."/>
            <person name="Mathewson C."/>
            <person name="Siddiqui A."/>
            <person name="Wye N."/>
            <person name="McPherson J."/>
            <person name="Zhao S."/>
            <person name="Fraser C.M."/>
            <person name="Shetty J."/>
            <person name="Shatsman S."/>
            <person name="Geer K."/>
            <person name="Chen Y."/>
            <person name="Abramzon S."/>
            <person name="Nierman W.C."/>
            <person name="Havlak P.H."/>
            <person name="Chen R."/>
            <person name="Durbin K.J."/>
            <person name="Egan A."/>
            <person name="Ren Y."/>
            <person name="Song X.-Z."/>
            <person name="Li B."/>
            <person name="Liu Y."/>
            <person name="Qin X."/>
            <person name="Cawley S."/>
            <person name="Cooney A.J."/>
            <person name="D'Souza L.M."/>
            <person name="Martin K."/>
            <person name="Wu J.Q."/>
            <person name="Gonzalez-Garay M.L."/>
            <person name="Jackson A.R."/>
            <person name="Kalafus K.J."/>
            <person name="McLeod M.P."/>
            <person name="Milosavljevic A."/>
            <person name="Virk D."/>
            <person name="Volkov A."/>
            <person name="Wheeler D.A."/>
            <person name="Zhang Z."/>
            <person name="Bailey J.A."/>
            <person name="Eichler E.E."/>
            <person name="Tuzun E."/>
            <person name="Birney E."/>
            <person name="Mongin E."/>
            <person name="Ureta-Vidal A."/>
            <person name="Woodwark C."/>
            <person name="Zdobnov E."/>
            <person name="Bork P."/>
            <person name="Suyama M."/>
            <person name="Torrents D."/>
            <person name="Alexandersson M."/>
            <person name="Trask B.J."/>
            <person name="Young J.M."/>
            <person name="Huang H."/>
            <person name="Wang H."/>
            <person name="Xing H."/>
            <person name="Daniels S."/>
            <person name="Gietzen D."/>
            <person name="Schmidt J."/>
            <person name="Stevens K."/>
            <person name="Vitt U."/>
            <person name="Wingrove J."/>
            <person name="Camara F."/>
            <person name="Mar Alba M."/>
            <person name="Abril J.F."/>
            <person name="Guigo R."/>
            <person name="Smit A."/>
            <person name="Dubchak I."/>
            <person name="Rubin E.M."/>
            <person name="Couronne O."/>
            <person name="Poliakov A."/>
            <person name="Huebner N."/>
            <person name="Ganten D."/>
            <person name="Goesele C."/>
            <person name="Hummel O."/>
            <person name="Kreitler T."/>
            <person name="Lee Y.-A."/>
            <person name="Monti J."/>
            <person name="Schulz H."/>
            <person name="Zimdahl H."/>
            <person name="Himmelbauer H."/>
            <person name="Lehrach H."/>
            <person name="Jacob H.J."/>
            <person name="Bromberg S."/>
            <person name="Gullings-Handley J."/>
            <person name="Jensen-Seaman M.I."/>
            <person name="Kwitek A.E."/>
            <person name="Lazar J."/>
            <person name="Pasko D."/>
            <person name="Tonellato P.J."/>
            <person name="Twigger S."/>
            <person name="Ponting C.P."/>
            <person name="Duarte J.M."/>
            <person name="Rice S."/>
            <person name="Goodstadt L."/>
            <person name="Beatson S.A."/>
            <person name="Emes R.D."/>
            <person name="Winter E.E."/>
            <person name="Webber C."/>
            <person name="Brandt P."/>
            <person name="Nyakatura G."/>
            <person name="Adetobi M."/>
            <person name="Chiaromonte F."/>
            <person name="Elnitski L."/>
            <person name="Eswara P."/>
            <person name="Hardison R.C."/>
            <person name="Hou M."/>
            <person name="Kolbe D."/>
            <person name="Makova K."/>
            <person name="Miller W."/>
            <person name="Nekrutenko A."/>
            <person name="Riemer C."/>
            <person name="Schwartz S."/>
            <person name="Taylor J."/>
            <person name="Yang S."/>
            <person name="Zhang Y."/>
            <person name="Lindpaintner K."/>
            <person name="Andrews T.D."/>
            <person name="Caccamo M."/>
            <person name="Clamp M."/>
            <person name="Clarke L."/>
            <person name="Curwen V."/>
            <person name="Durbin R.M."/>
            <person name="Eyras E."/>
            <person name="Searle S.M."/>
            <person name="Cooper G.M."/>
            <person name="Batzoglou S."/>
            <person name="Brudno M."/>
            <person name="Sidow A."/>
            <person name="Stone E.A."/>
            <person name="Payseur B.A."/>
            <person name="Bourque G."/>
            <person name="Lopez-Otin C."/>
            <person name="Puente X.S."/>
            <person name="Chakrabarti K."/>
            <person name="Chatterji S."/>
            <person name="Dewey C."/>
            <person name="Pachter L."/>
            <person name="Bray N."/>
            <person name="Yap V.B."/>
            <person name="Caspi A."/>
            <person name="Tesler G."/>
            <person name="Pevzner P.A."/>
            <person name="Haussler D."/>
            <person name="Roskin K.M."/>
            <person name="Baertsch R."/>
            <person name="Clawson H."/>
            <person name="Furey T.S."/>
            <person name="Hinrichs A.S."/>
            <person name="Karolchik D."/>
            <person name="Kent W.J."/>
            <person name="Rosenbloom K.R."/>
            <person name="Trumbower H."/>
            <person name="Weirauch M."/>
            <person name="Cooper D.N."/>
            <person name="Stenson P.D."/>
            <person name="Ma B."/>
            <person name="Brent M."/>
            <person name="Arumugam M."/>
            <person name="Shteynberg D."/>
            <person name="Copley R.R."/>
            <person name="Taylor M.S."/>
            <person name="Riethman H."/>
            <person name="Mudunuri U."/>
            <person name="Peterson J."/>
            <person name="Guyer M."/>
            <person name="Felsenfeld A."/>
            <person name="Old S."/>
            <person name="Mockrin S."/>
            <person name="Collins F.S."/>
        </authorList>
    </citation>
    <scope>NUCLEOTIDE SEQUENCE [LARGE SCALE GENOMIC DNA]</scope>
    <source>
        <strain evidence="10">Brown Norway</strain>
    </source>
</reference>
<reference key="4">
    <citation type="journal article" date="2009" name="Proc. Natl. Acad. Sci. U.S.A.">
        <title>Calneurons provide a calcium threshold for trans-Golgi network to plasma membrane trafficking.</title>
        <authorList>
            <person name="Mikhaylova M."/>
            <person name="Reddy P.P."/>
            <person name="Munsch T."/>
            <person name="Landgraf P."/>
            <person name="Suman S.K."/>
            <person name="Smalla K.-H."/>
            <person name="Gundelfinger E.D."/>
            <person name="Sharma Y."/>
            <person name="Kreutz M.R."/>
        </authorList>
    </citation>
    <scope>FUNCTION</scope>
    <scope>INTERACTION WITH PI4KB</scope>
    <scope>SUBCELLULAR LOCATION</scope>
</reference>